<organism>
    <name type="scientific">Corynebacterium urealyticum (strain ATCC 43042 / DSM 7109)</name>
    <dbReference type="NCBI Taxonomy" id="504474"/>
    <lineage>
        <taxon>Bacteria</taxon>
        <taxon>Bacillati</taxon>
        <taxon>Actinomycetota</taxon>
        <taxon>Actinomycetes</taxon>
        <taxon>Mycobacteriales</taxon>
        <taxon>Corynebacteriaceae</taxon>
        <taxon>Corynebacterium</taxon>
    </lineage>
</organism>
<proteinExistence type="inferred from homology"/>
<protein>
    <recommendedName>
        <fullName evidence="1">Holliday junction branch migration complex subunit RuvA</fullName>
    </recommendedName>
</protein>
<feature type="chain" id="PRO_1000090306" description="Holliday junction branch migration complex subunit RuvA">
    <location>
        <begin position="1"/>
        <end position="206"/>
    </location>
</feature>
<feature type="region of interest" description="Domain I" evidence="1">
    <location>
        <begin position="1"/>
        <end position="63"/>
    </location>
</feature>
<feature type="region of interest" description="Domain II" evidence="1">
    <location>
        <begin position="64"/>
        <end position="142"/>
    </location>
</feature>
<feature type="region of interest" description="Flexible linker" evidence="1">
    <location>
        <begin position="143"/>
        <end position="150"/>
    </location>
</feature>
<feature type="region of interest" description="Domain III" evidence="1">
    <location>
        <begin position="151"/>
        <end position="206"/>
    </location>
</feature>
<evidence type="ECO:0000255" key="1">
    <source>
        <dbReference type="HAMAP-Rule" id="MF_00031"/>
    </source>
</evidence>
<keyword id="KW-0963">Cytoplasm</keyword>
<keyword id="KW-0227">DNA damage</keyword>
<keyword id="KW-0233">DNA recombination</keyword>
<keyword id="KW-0234">DNA repair</keyword>
<keyword id="KW-0238">DNA-binding</keyword>
<keyword id="KW-1185">Reference proteome</keyword>
<reference key="1">
    <citation type="journal article" date="2008" name="J. Biotechnol.">
        <title>The lifestyle of Corynebacterium urealyticum derived from its complete genome sequence established by pyrosequencing.</title>
        <authorList>
            <person name="Tauch A."/>
            <person name="Trost E."/>
            <person name="Tilker A."/>
            <person name="Ludewig U."/>
            <person name="Schneiker S."/>
            <person name="Goesmann A."/>
            <person name="Arnold W."/>
            <person name="Bekel T."/>
            <person name="Brinkrolf K."/>
            <person name="Brune I."/>
            <person name="Goetker S."/>
            <person name="Kalinowski J."/>
            <person name="Kamp P.-B."/>
            <person name="Lobo F.P."/>
            <person name="Viehoever P."/>
            <person name="Weisshaar B."/>
            <person name="Soriano F."/>
            <person name="Droege M."/>
            <person name="Puehler A."/>
        </authorList>
    </citation>
    <scope>NUCLEOTIDE SEQUENCE [LARGE SCALE GENOMIC DNA]</scope>
    <source>
        <strain>ATCC 43042 / DSM 7109</strain>
    </source>
</reference>
<sequence length="206" mass="21697">MISSLRGDVIDKGLDYVVIECGGVGYRCLATGDTLATLRRGESAFVLTSLVIRDDAHTLYAFSTSEQRETFGILQKVSGVGARLAMGVMSVLQPADIARAVEEGDIKTLQQAPGVGKRLAERMAVDLKGKFPALEATSGQATIGDIAATGNDTALQSQVVEALVGLGFTEAKAATAVKKILEEQNGTTDPSSVLREALQRLSGQKR</sequence>
<name>RUVA_CORU7</name>
<comment type="function">
    <text evidence="1">The RuvA-RuvB-RuvC complex processes Holliday junction (HJ) DNA during genetic recombination and DNA repair, while the RuvA-RuvB complex plays an important role in the rescue of blocked DNA replication forks via replication fork reversal (RFR). RuvA specifically binds to HJ cruciform DNA, conferring on it an open structure. The RuvB hexamer acts as an ATP-dependent pump, pulling dsDNA into and through the RuvAB complex. HJ branch migration allows RuvC to scan DNA until it finds its consensus sequence, where it cleaves and resolves the cruciform DNA.</text>
</comment>
<comment type="subunit">
    <text evidence="1">Homotetramer. Forms an RuvA(8)-RuvB(12)-Holliday junction (HJ) complex. HJ DNA is sandwiched between 2 RuvA tetramers; dsDNA enters through RuvA and exits via RuvB. An RuvB hexamer assembles on each DNA strand where it exits the tetramer. Each RuvB hexamer is contacted by two RuvA subunits (via domain III) on 2 adjacent RuvB subunits; this complex drives branch migration. In the full resolvosome a probable DNA-RuvA(4)-RuvB(12)-RuvC(2) complex forms which resolves the HJ.</text>
</comment>
<comment type="subcellular location">
    <subcellularLocation>
        <location evidence="1">Cytoplasm</location>
    </subcellularLocation>
</comment>
<comment type="domain">
    <text evidence="1">Has three domains with a flexible linker between the domains II and III and assumes an 'L' shape. Domain III is highly mobile and contacts RuvB.</text>
</comment>
<comment type="similarity">
    <text evidence="1">Belongs to the RuvA family.</text>
</comment>
<accession>B1VDJ7</accession>
<gene>
    <name evidence="1" type="primary">ruvA</name>
    <name type="ordered locus">cu0935</name>
</gene>
<dbReference type="EMBL" id="AM942444">
    <property type="protein sequence ID" value="CAQ04895.1"/>
    <property type="molecule type" value="Genomic_DNA"/>
</dbReference>
<dbReference type="RefSeq" id="WP_012360184.1">
    <property type="nucleotide sequence ID" value="NC_010545.1"/>
</dbReference>
<dbReference type="SMR" id="B1VDJ7"/>
<dbReference type="STRING" id="504474.cu0935"/>
<dbReference type="GeneID" id="60603717"/>
<dbReference type="KEGG" id="cur:cu0935"/>
<dbReference type="eggNOG" id="COG0632">
    <property type="taxonomic scope" value="Bacteria"/>
</dbReference>
<dbReference type="HOGENOM" id="CLU_087936_2_1_11"/>
<dbReference type="Proteomes" id="UP000001727">
    <property type="component" value="Chromosome"/>
</dbReference>
<dbReference type="GO" id="GO:0005737">
    <property type="term" value="C:cytoplasm"/>
    <property type="evidence" value="ECO:0007669"/>
    <property type="project" value="UniProtKB-SubCell"/>
</dbReference>
<dbReference type="GO" id="GO:0009379">
    <property type="term" value="C:Holliday junction helicase complex"/>
    <property type="evidence" value="ECO:0007669"/>
    <property type="project" value="InterPro"/>
</dbReference>
<dbReference type="GO" id="GO:0048476">
    <property type="term" value="C:Holliday junction resolvase complex"/>
    <property type="evidence" value="ECO:0007669"/>
    <property type="project" value="UniProtKB-UniRule"/>
</dbReference>
<dbReference type="GO" id="GO:0005524">
    <property type="term" value="F:ATP binding"/>
    <property type="evidence" value="ECO:0007669"/>
    <property type="project" value="InterPro"/>
</dbReference>
<dbReference type="GO" id="GO:0000400">
    <property type="term" value="F:four-way junction DNA binding"/>
    <property type="evidence" value="ECO:0007669"/>
    <property type="project" value="UniProtKB-UniRule"/>
</dbReference>
<dbReference type="GO" id="GO:0009378">
    <property type="term" value="F:four-way junction helicase activity"/>
    <property type="evidence" value="ECO:0007669"/>
    <property type="project" value="InterPro"/>
</dbReference>
<dbReference type="GO" id="GO:0006310">
    <property type="term" value="P:DNA recombination"/>
    <property type="evidence" value="ECO:0007669"/>
    <property type="project" value="UniProtKB-UniRule"/>
</dbReference>
<dbReference type="GO" id="GO:0006281">
    <property type="term" value="P:DNA repair"/>
    <property type="evidence" value="ECO:0007669"/>
    <property type="project" value="UniProtKB-UniRule"/>
</dbReference>
<dbReference type="CDD" id="cd14332">
    <property type="entry name" value="UBA_RuvA_C"/>
    <property type="match status" value="1"/>
</dbReference>
<dbReference type="Gene3D" id="1.10.150.20">
    <property type="entry name" value="5' to 3' exonuclease, C-terminal subdomain"/>
    <property type="match status" value="1"/>
</dbReference>
<dbReference type="Gene3D" id="1.10.8.10">
    <property type="entry name" value="DNA helicase RuvA subunit, C-terminal domain"/>
    <property type="match status" value="1"/>
</dbReference>
<dbReference type="Gene3D" id="2.40.50.140">
    <property type="entry name" value="Nucleic acid-binding proteins"/>
    <property type="match status" value="1"/>
</dbReference>
<dbReference type="HAMAP" id="MF_00031">
    <property type="entry name" value="DNA_HJ_migration_RuvA"/>
    <property type="match status" value="1"/>
</dbReference>
<dbReference type="InterPro" id="IPR013849">
    <property type="entry name" value="DNA_helicase_Holl-junc_RuvA_I"/>
</dbReference>
<dbReference type="InterPro" id="IPR012340">
    <property type="entry name" value="NA-bd_OB-fold"/>
</dbReference>
<dbReference type="InterPro" id="IPR000085">
    <property type="entry name" value="RuvA"/>
</dbReference>
<dbReference type="InterPro" id="IPR010994">
    <property type="entry name" value="RuvA_2-like"/>
</dbReference>
<dbReference type="InterPro" id="IPR011114">
    <property type="entry name" value="RuvA_C"/>
</dbReference>
<dbReference type="InterPro" id="IPR036267">
    <property type="entry name" value="RuvA_C_sf"/>
</dbReference>
<dbReference type="NCBIfam" id="TIGR00084">
    <property type="entry name" value="ruvA"/>
    <property type="match status" value="1"/>
</dbReference>
<dbReference type="Pfam" id="PF14520">
    <property type="entry name" value="HHH_5"/>
    <property type="match status" value="1"/>
</dbReference>
<dbReference type="Pfam" id="PF07499">
    <property type="entry name" value="RuvA_C"/>
    <property type="match status" value="1"/>
</dbReference>
<dbReference type="Pfam" id="PF01330">
    <property type="entry name" value="RuvA_N"/>
    <property type="match status" value="1"/>
</dbReference>
<dbReference type="SUPFAM" id="SSF46929">
    <property type="entry name" value="DNA helicase RuvA subunit, C-terminal domain"/>
    <property type="match status" value="1"/>
</dbReference>
<dbReference type="SUPFAM" id="SSF50249">
    <property type="entry name" value="Nucleic acid-binding proteins"/>
    <property type="match status" value="1"/>
</dbReference>
<dbReference type="SUPFAM" id="SSF47781">
    <property type="entry name" value="RuvA domain 2-like"/>
    <property type="match status" value="1"/>
</dbReference>